<dbReference type="EC" id="1.-.-.-" evidence="3"/>
<dbReference type="EMBL" id="AB981314">
    <property type="protein sequence ID" value="BAP81859.1"/>
    <property type="molecule type" value="Genomic_DNA"/>
</dbReference>
<dbReference type="SMR" id="A0A097ZPF7"/>
<dbReference type="BioCyc" id="MetaCyc:MONOMER-19044"/>
<dbReference type="UniPathway" id="UPA00213"/>
<dbReference type="GO" id="GO:0016020">
    <property type="term" value="C:membrane"/>
    <property type="evidence" value="ECO:0007669"/>
    <property type="project" value="UniProtKB-SubCell"/>
</dbReference>
<dbReference type="GO" id="GO:0071949">
    <property type="term" value="F:FAD binding"/>
    <property type="evidence" value="ECO:0007669"/>
    <property type="project" value="InterPro"/>
</dbReference>
<dbReference type="GO" id="GO:0004497">
    <property type="term" value="F:monooxygenase activity"/>
    <property type="evidence" value="ECO:0007669"/>
    <property type="project" value="InterPro"/>
</dbReference>
<dbReference type="GO" id="GO:0016114">
    <property type="term" value="P:terpenoid biosynthetic process"/>
    <property type="evidence" value="ECO:0007669"/>
    <property type="project" value="UniProtKB-UniPathway"/>
</dbReference>
<dbReference type="Gene3D" id="3.50.50.60">
    <property type="entry name" value="FAD/NAD(P)-binding domain"/>
    <property type="match status" value="1"/>
</dbReference>
<dbReference type="InterPro" id="IPR002938">
    <property type="entry name" value="FAD-bd"/>
</dbReference>
<dbReference type="InterPro" id="IPR036188">
    <property type="entry name" value="FAD/NAD-bd_sf"/>
</dbReference>
<dbReference type="InterPro" id="IPR050562">
    <property type="entry name" value="FAD_mOase_fung"/>
</dbReference>
<dbReference type="PANTHER" id="PTHR47356:SF2">
    <property type="entry name" value="FAD-BINDING DOMAIN-CONTAINING PROTEIN-RELATED"/>
    <property type="match status" value="1"/>
</dbReference>
<dbReference type="PANTHER" id="PTHR47356">
    <property type="entry name" value="FAD-DEPENDENT MONOOXYGENASE ASQG-RELATED"/>
    <property type="match status" value="1"/>
</dbReference>
<dbReference type="Pfam" id="PF01494">
    <property type="entry name" value="FAD_binding_3"/>
    <property type="match status" value="1"/>
</dbReference>
<dbReference type="PRINTS" id="PR00420">
    <property type="entry name" value="RNGMNOXGNASE"/>
</dbReference>
<dbReference type="SUPFAM" id="SSF51905">
    <property type="entry name" value="FAD/NAD(P)-binding domain"/>
    <property type="match status" value="1"/>
</dbReference>
<proteinExistence type="evidence at protein level"/>
<organism>
    <name type="scientific">Emericella variicolor</name>
    <name type="common">Aspergillus stellatus</name>
    <dbReference type="NCBI Taxonomy" id="1549217"/>
    <lineage>
        <taxon>Eukaryota</taxon>
        <taxon>Fungi</taxon>
        <taxon>Dikarya</taxon>
        <taxon>Ascomycota</taxon>
        <taxon>Pezizomycotina</taxon>
        <taxon>Eurotiomycetes</taxon>
        <taxon>Eurotiomycetidae</taxon>
        <taxon>Eurotiales</taxon>
        <taxon>Aspergillaceae</taxon>
        <taxon>Aspergillus</taxon>
        <taxon>Aspergillus subgen. Nidulantes</taxon>
    </lineage>
</organism>
<accession>A0A097ZPF7</accession>
<reference key="1">
    <citation type="journal article" date="2014" name="J. Am. Chem. Soc.">
        <title>Complete biosynthetic pathway of anditomin: nature's sophisticated synthetic route to a complex fungal meroterpenoid.</title>
        <authorList>
            <person name="Matsuda Y."/>
            <person name="Wakimoto T."/>
            <person name="Mori T."/>
            <person name="Awakawa T."/>
            <person name="Abe I."/>
        </authorList>
    </citation>
    <scope>NUCLEOTIDE SEQUENCE [GENOMIC DNA]</scope>
    <scope>FUNCTION</scope>
    <scope>CATALYTIC ACTIVITY</scope>
    <source>
        <strain>ATCC 12069 / CBS 136.55 / IMI 60316 / NBRC 32302</strain>
    </source>
</reference>
<sequence length="471" mass="53256">MEQQSLKVVIVGGSIAGLTLAHCLHRANIDHVVLEKRAEIAPQEGASIGIWPNGARMLEQLGLYGELEKLTEPLNLMHIAFPDGFSFEDLLPTTINQRFGYPIIFLDRQKFLETLYRKYPDKSKIVTNTRVAEVQSSEKCARVITEDGTMYEGDIVVGADGVHSLVRREMWKLGDSKQPGSVPSREKTGMTVEYSCVYGISSPIVGLRAGESVNSYMDGMTVLTFHGKGGRVYWFLIQKLHQKYTYPNTPRYTVEDAERLCTDHRDTTIWKDIRIGHLWDNREVVSMTALEENLFAKWHFHRIGLMGDSIHKMTPNIGQGANSAIEDAAVFSSLLVHMMTSEGPGRPSSARIQRLLHDYQACRYERAEMIYHRSRFGARFQSRDDAVKLIVGRYVVPRIRNRLANISSMLIANGEIIQYLPFPKRSGPGWEKFRNKGEWMPYTPFALFSAILLVQHVVPLLGLTSPLLLAS</sequence>
<comment type="function">
    <text evidence="3">FAD-dependent monooxygenase; part of the gene cluster that mediates the biosynthesis of anditomin, a fungal meroterpenoid (PubMed:25216349). The first step of the pathway is the synthesis of 3,5-dimethylorsellinic acid (DMOA) by the polyketide synthase andM (PubMed:25216349). DMOA is then converted to the phthalide compound 5,7-dihydroxy-4,6-dimethylphthalide (DHDMP) by the cytochrome P450 monooxygenase andK, which is further prenylated by the prenyltransferase andD to yield farnesyl-DHDMP (PubMed:25216349). Further epoxidation by the FAD-dependent monooxygenase andE leads to epoxyfarnesyl-DHDMP (PubMed:25216349). The next step involves the terpene cyclase andB that converts epoxyfarnesyl-DHDMP into preandiloid A through opening of the epoxide ring followed by the cyclization of the farnesyl moiety (PubMed:25216349). Preandiloid A is in turn oxidized at the C-3 hydroxyl group to yield preandiloid B by the dehydrogenase andC (PubMed:25216349). The dioxygenase andA is solely responsible for the dehydrogenation of preandiloid B leading to the enone preandiloid C, as well as for the intriguing structural rearrangement to generate the bicyclo[2.2.2]octane core, transforming preandiloid C into andiconin (PubMed:25216349). FAD-binding monooxygenase andJ then produces andilesin D which is reduced by dehydrogenase andI to yield andilesin A (PubMed:25216349). Action of acetyltransferase andG followed by a spontaneous acetate elimination leads then to andilesin B, which is in turn substrate of the short chain dehydrogenase andH to yield andilesin C (PubMed:25216349). Finally, the dioxygenase andF catalyzes the transformation of andilesin C to anditomin (PubMed:25216349).</text>
</comment>
<comment type="cofactor">
    <cofactor evidence="5">
        <name>FAD</name>
        <dbReference type="ChEBI" id="CHEBI:57692"/>
    </cofactor>
</comment>
<comment type="pathway">
    <text evidence="3">Secondary metabolite biosynthesis; terpenoid biosynthesis.</text>
</comment>
<comment type="subcellular location">
    <subcellularLocation>
        <location evidence="2">Membrane</location>
        <topology evidence="2">Multi-pass membrane protein</topology>
    </subcellularLocation>
</comment>
<comment type="similarity">
    <text evidence="5">Belongs to the paxM FAD-dependent monooxygenase family.</text>
</comment>
<keyword id="KW-0274">FAD</keyword>
<keyword id="KW-0285">Flavoprotein</keyword>
<keyword id="KW-0472">Membrane</keyword>
<keyword id="KW-0560">Oxidoreductase</keyword>
<keyword id="KW-0812">Transmembrane</keyword>
<keyword id="KW-1133">Transmembrane helix</keyword>
<protein>
    <recommendedName>
        <fullName evidence="4">FAD-dependent monooxygenase andE</fullName>
        <ecNumber evidence="3">1.-.-.-</ecNumber>
    </recommendedName>
    <alternativeName>
        <fullName evidence="4">Anditomin synthesis protein E</fullName>
    </alternativeName>
</protein>
<gene>
    <name evidence="4" type="primary">andE</name>
</gene>
<evidence type="ECO:0000250" key="1">
    <source>
        <dbReference type="UniProtKB" id="B8M9J8"/>
    </source>
</evidence>
<evidence type="ECO:0000255" key="2"/>
<evidence type="ECO:0000269" key="3">
    <source>
    </source>
</evidence>
<evidence type="ECO:0000303" key="4">
    <source>
    </source>
</evidence>
<evidence type="ECO:0000305" key="5"/>
<name>ANDE_EMEVA</name>
<feature type="chain" id="PRO_0000436581" description="FAD-dependent monooxygenase andE">
    <location>
        <begin position="1"/>
        <end position="471"/>
    </location>
</feature>
<feature type="transmembrane region" description="Helical" evidence="2">
    <location>
        <begin position="403"/>
        <end position="423"/>
    </location>
</feature>
<feature type="transmembrane region" description="Helical" evidence="2">
    <location>
        <begin position="443"/>
        <end position="463"/>
    </location>
</feature>
<feature type="active site" evidence="1">
    <location>
        <position position="216"/>
    </location>
</feature>
<feature type="binding site" evidence="1">
    <location>
        <position position="35"/>
    </location>
    <ligand>
        <name>FAD</name>
        <dbReference type="ChEBI" id="CHEBI:57692"/>
    </ligand>
</feature>
<feature type="binding site" evidence="1">
    <location>
        <position position="49"/>
    </location>
    <ligand>
        <name>FAD</name>
        <dbReference type="ChEBI" id="CHEBI:57692"/>
    </ligand>
</feature>
<feature type="binding site" evidence="1">
    <location>
        <position position="108"/>
    </location>
    <ligand>
        <name>FAD</name>
        <dbReference type="ChEBI" id="CHEBI:57692"/>
    </ligand>
</feature>
<feature type="binding site" evidence="1">
    <location>
        <position position="308"/>
    </location>
    <ligand>
        <name>FAD</name>
        <dbReference type="ChEBI" id="CHEBI:57692"/>
    </ligand>
</feature>
<feature type="binding site" evidence="1">
    <location>
        <position position="321"/>
    </location>
    <ligand>
        <name>FAD</name>
        <dbReference type="ChEBI" id="CHEBI:57692"/>
    </ligand>
</feature>